<feature type="chain" id="PRO_0000448606" description="Toxin Res">
    <location>
        <begin position="1"/>
        <end position="156"/>
    </location>
</feature>
<feature type="mutagenesis site" description="No longer toxic in E.coli, E.coli intracellular NAD(+) levels do not change." evidence="3">
    <original>R</original>
    <variation>A</variation>
    <location>
        <position position="27"/>
    </location>
</feature>
<feature type="mutagenesis site" description="Significantly decreased toxicity in E.coli, in liquid culture is not neutralized by antitoxin Xre, partially neutralized when grown on solid medium." evidence="3">
    <original>Y</original>
    <variation>A</variation>
    <location>
        <position position="37"/>
    </location>
</feature>
<feature type="mutagenesis site" description="No longer toxic in E.coli." evidence="3">
    <original>E</original>
    <variation>A</variation>
    <location>
        <position position="48"/>
    </location>
</feature>
<feature type="mutagenesis site" description="No longer toxic in E.coli." evidence="3">
    <original>S</original>
    <variation>A</variation>
    <location>
        <position position="115"/>
    </location>
</feature>
<accession>Q7N4H9</accession>
<comment type="function">
    <text evidence="3">Toxic component of a type II toxin-antitoxin (TA) system. Expression in E.coli inhibits cell growth; bacteriostasis is neutralized by expression of cognate antitoxin Xre. Expression in E.coli leads to almost complete depletion of intracellular NAD(+): NAD(+) levels are partially restored when coexpressed with antitoxin Xre.</text>
</comment>
<comment type="subunit">
    <text evidence="2">Homodimer. Forms a complex with cognate antitoxin Xre.</text>
</comment>
<comment type="similarity">
    <text evidence="5">Belongs to the MbcT/ParT/Res family.</text>
</comment>
<proteinExistence type="evidence at protein level"/>
<gene>
    <name evidence="4" type="primary">res</name>
    <name type="ordered locus">plu2358</name>
</gene>
<name>RES_PHOLL</name>
<dbReference type="EC" id="2.4.2.-" evidence="1"/>
<dbReference type="EMBL" id="BX571866">
    <property type="protein sequence ID" value="CAE14651.1"/>
    <property type="molecule type" value="Genomic_DNA"/>
</dbReference>
<dbReference type="RefSeq" id="WP_011146594.1">
    <property type="nucleotide sequence ID" value="NC_005126.1"/>
</dbReference>
<dbReference type="SMR" id="Q7N4H9"/>
<dbReference type="STRING" id="243265.plu2358"/>
<dbReference type="GeneID" id="48848630"/>
<dbReference type="KEGG" id="plu:plu2358"/>
<dbReference type="eggNOG" id="COG5654">
    <property type="taxonomic scope" value="Bacteria"/>
</dbReference>
<dbReference type="HOGENOM" id="CLU_133611_0_1_6"/>
<dbReference type="OrthoDB" id="9789501at2"/>
<dbReference type="Proteomes" id="UP000002514">
    <property type="component" value="Chromosome"/>
</dbReference>
<dbReference type="GO" id="GO:0016779">
    <property type="term" value="F:nucleotidyltransferase activity"/>
    <property type="evidence" value="ECO:0007669"/>
    <property type="project" value="UniProtKB-KW"/>
</dbReference>
<dbReference type="InterPro" id="IPR014914">
    <property type="entry name" value="RES_dom"/>
</dbReference>
<dbReference type="Pfam" id="PF08808">
    <property type="entry name" value="RES"/>
    <property type="match status" value="1"/>
</dbReference>
<dbReference type="SMART" id="SM00953">
    <property type="entry name" value="RES"/>
    <property type="match status" value="1"/>
</dbReference>
<organism>
    <name type="scientific">Photorhabdus laumondii subsp. laumondii (strain DSM 15139 / CIP 105565 / TT01)</name>
    <name type="common">Photorhabdus luminescens subsp. laumondii</name>
    <dbReference type="NCBI Taxonomy" id="243265"/>
    <lineage>
        <taxon>Bacteria</taxon>
        <taxon>Pseudomonadati</taxon>
        <taxon>Pseudomonadota</taxon>
        <taxon>Gammaproteobacteria</taxon>
        <taxon>Enterobacterales</taxon>
        <taxon>Morganellaceae</taxon>
        <taxon>Photorhabdus</taxon>
    </lineage>
</organism>
<evidence type="ECO:0000250" key="1">
    <source>
        <dbReference type="UniProtKB" id="P9WLP9"/>
    </source>
</evidence>
<evidence type="ECO:0000250" key="2">
    <source>
        <dbReference type="UniProtKB" id="Q88K57"/>
    </source>
</evidence>
<evidence type="ECO:0000269" key="3">
    <source>
    </source>
</evidence>
<evidence type="ECO:0000303" key="4">
    <source>
    </source>
</evidence>
<evidence type="ECO:0000305" key="5"/>
<evidence type="ECO:0000305" key="6">
    <source>
    </source>
</evidence>
<sequence>MILYRLTRSKYVESAWSGTGAKLYGGRWHNIGRPAVYVATSVSLAVLEVLVHVGDDELLTDFALLSIDIPENQIDILDIDTLPSDWNAPVPSTCTMEIGSEWFEVSHSIGLVVPSAIVPYENNVILNPMAKDFHKYINTVKRLDFGIDSRLVKAKK</sequence>
<keyword id="KW-0520">NAD</keyword>
<keyword id="KW-0548">Nucleotidyltransferase</keyword>
<keyword id="KW-1185">Reference proteome</keyword>
<keyword id="KW-1277">Toxin-antitoxin system</keyword>
<keyword id="KW-0808">Transferase</keyword>
<reference key="1">
    <citation type="journal article" date="2003" name="Nat. Biotechnol.">
        <title>The genome sequence of the entomopathogenic bacterium Photorhabdus luminescens.</title>
        <authorList>
            <person name="Duchaud E."/>
            <person name="Rusniok C."/>
            <person name="Frangeul L."/>
            <person name="Buchrieser C."/>
            <person name="Givaudan A."/>
            <person name="Taourit S."/>
            <person name="Bocs S."/>
            <person name="Boursaux-Eude C."/>
            <person name="Chandler M."/>
            <person name="Charles J.-F."/>
            <person name="Dassa E."/>
            <person name="Derose R."/>
            <person name="Derzelle S."/>
            <person name="Freyssinet G."/>
            <person name="Gaudriault S."/>
            <person name="Medigue C."/>
            <person name="Lanois A."/>
            <person name="Powell K."/>
            <person name="Siguier P."/>
            <person name="Vincent R."/>
            <person name="Wingate V."/>
            <person name="Zouine M."/>
            <person name="Glaser P."/>
            <person name="Boemare N."/>
            <person name="Danchin A."/>
            <person name="Kunst F."/>
        </authorList>
    </citation>
    <scope>NUCLEOTIDE SEQUENCE [LARGE SCALE GENOMIC DNA]</scope>
    <source>
        <strain>DSM 15139 / CIP 105565 / TT01</strain>
    </source>
</reference>
<reference key="2">
    <citation type="journal article" date="2019" name="Mol. Microbiol.">
        <title>The RES domain toxins of RES-Xre toxin-antitoxin modules induce cell stasis by degrading NAD+.</title>
        <authorList>
            <person name="Skjerning R.B."/>
            <person name="Senissar M."/>
            <person name="Winther K.S."/>
            <person name="Gerdes K."/>
            <person name="Brodersen D.E."/>
        </authorList>
    </citation>
    <scope>FUNCTION AS A TOXIN</scope>
    <scope>EXPRESSION IN E.COLI</scope>
    <scope>MUTAGENESIS OF ARG-27; TYR-37; GLU-48 AND SER-115</scope>
    <source>
        <strain>DSM 15139 / CIP 105565 / TT01</strain>
    </source>
</reference>
<protein>
    <recommendedName>
        <fullName evidence="6">Toxin Res</fullName>
        <ecNumber evidence="1">2.4.2.-</ecNumber>
    </recommendedName>
</protein>